<accession>Q4URN6</accession>
<reference key="1">
    <citation type="journal article" date="2005" name="Genome Res.">
        <title>Comparative and functional genomic analyses of the pathogenicity of phytopathogen Xanthomonas campestris pv. campestris.</title>
        <authorList>
            <person name="Qian W."/>
            <person name="Jia Y."/>
            <person name="Ren S.-X."/>
            <person name="He Y.-Q."/>
            <person name="Feng J.-X."/>
            <person name="Lu L.-F."/>
            <person name="Sun Q."/>
            <person name="Ying G."/>
            <person name="Tang D.-J."/>
            <person name="Tang H."/>
            <person name="Wu W."/>
            <person name="Hao P."/>
            <person name="Wang L."/>
            <person name="Jiang B.-L."/>
            <person name="Zeng S."/>
            <person name="Gu W.-Y."/>
            <person name="Lu G."/>
            <person name="Rong L."/>
            <person name="Tian Y."/>
            <person name="Yao Z."/>
            <person name="Fu G."/>
            <person name="Chen B."/>
            <person name="Fang R."/>
            <person name="Qiang B."/>
            <person name="Chen Z."/>
            <person name="Zhao G.-P."/>
            <person name="Tang J.-L."/>
            <person name="He C."/>
        </authorList>
    </citation>
    <scope>NUCLEOTIDE SEQUENCE [LARGE SCALE GENOMIC DNA]</scope>
    <source>
        <strain>8004</strain>
    </source>
</reference>
<protein>
    <recommendedName>
        <fullName evidence="1">Nucleoid-associated protein XC_3243</fullName>
    </recommendedName>
</protein>
<gene>
    <name type="ordered locus">XC_3243</name>
</gene>
<name>Y3243_XANC8</name>
<dbReference type="EMBL" id="CP000050">
    <property type="protein sequence ID" value="AAY50287.1"/>
    <property type="molecule type" value="Genomic_DNA"/>
</dbReference>
<dbReference type="RefSeq" id="WP_011036205.1">
    <property type="nucleotide sequence ID" value="NZ_CP155948.1"/>
</dbReference>
<dbReference type="SMR" id="Q4URN6"/>
<dbReference type="KEGG" id="xcb:XC_3243"/>
<dbReference type="HOGENOM" id="CLU_140930_0_0_6"/>
<dbReference type="Proteomes" id="UP000000420">
    <property type="component" value="Chromosome"/>
</dbReference>
<dbReference type="GO" id="GO:0043590">
    <property type="term" value="C:bacterial nucleoid"/>
    <property type="evidence" value="ECO:0007669"/>
    <property type="project" value="UniProtKB-UniRule"/>
</dbReference>
<dbReference type="GO" id="GO:0005829">
    <property type="term" value="C:cytosol"/>
    <property type="evidence" value="ECO:0007669"/>
    <property type="project" value="TreeGrafter"/>
</dbReference>
<dbReference type="GO" id="GO:0003677">
    <property type="term" value="F:DNA binding"/>
    <property type="evidence" value="ECO:0007669"/>
    <property type="project" value="UniProtKB-UniRule"/>
</dbReference>
<dbReference type="FunFam" id="3.30.1310.10:FF:000001">
    <property type="entry name" value="Nucleoid-associated protein YbaB"/>
    <property type="match status" value="1"/>
</dbReference>
<dbReference type="Gene3D" id="3.30.1310.10">
    <property type="entry name" value="Nucleoid-associated protein YbaB-like domain"/>
    <property type="match status" value="1"/>
</dbReference>
<dbReference type="HAMAP" id="MF_00274">
    <property type="entry name" value="DNA_YbaB_EbfC"/>
    <property type="match status" value="1"/>
</dbReference>
<dbReference type="InterPro" id="IPR036894">
    <property type="entry name" value="YbaB-like_sf"/>
</dbReference>
<dbReference type="InterPro" id="IPR004401">
    <property type="entry name" value="YbaB/EbfC"/>
</dbReference>
<dbReference type="NCBIfam" id="TIGR00103">
    <property type="entry name" value="DNA_YbaB_EbfC"/>
    <property type="match status" value="1"/>
</dbReference>
<dbReference type="PANTHER" id="PTHR33449">
    <property type="entry name" value="NUCLEOID-ASSOCIATED PROTEIN YBAB"/>
    <property type="match status" value="1"/>
</dbReference>
<dbReference type="PANTHER" id="PTHR33449:SF1">
    <property type="entry name" value="NUCLEOID-ASSOCIATED PROTEIN YBAB"/>
    <property type="match status" value="1"/>
</dbReference>
<dbReference type="Pfam" id="PF02575">
    <property type="entry name" value="YbaB_DNA_bd"/>
    <property type="match status" value="1"/>
</dbReference>
<dbReference type="PIRSF" id="PIRSF004555">
    <property type="entry name" value="UCP004555"/>
    <property type="match status" value="1"/>
</dbReference>
<dbReference type="SUPFAM" id="SSF82607">
    <property type="entry name" value="YbaB-like"/>
    <property type="match status" value="1"/>
</dbReference>
<comment type="function">
    <text evidence="1">Binds to DNA and alters its conformation. May be involved in regulation of gene expression, nucleoid organization and DNA protection.</text>
</comment>
<comment type="subunit">
    <text evidence="1">Homodimer.</text>
</comment>
<comment type="subcellular location">
    <subcellularLocation>
        <location evidence="1">Cytoplasm</location>
        <location evidence="1">Nucleoid</location>
    </subcellularLocation>
</comment>
<comment type="similarity">
    <text evidence="1">Belongs to the YbaB/EbfC family.</text>
</comment>
<proteinExistence type="inferred from homology"/>
<evidence type="ECO:0000255" key="1">
    <source>
        <dbReference type="HAMAP-Rule" id="MF_00274"/>
    </source>
</evidence>
<evidence type="ECO:0000256" key="2">
    <source>
        <dbReference type="SAM" id="MobiDB-lite"/>
    </source>
</evidence>
<organism>
    <name type="scientific">Xanthomonas campestris pv. campestris (strain 8004)</name>
    <dbReference type="NCBI Taxonomy" id="314565"/>
    <lineage>
        <taxon>Bacteria</taxon>
        <taxon>Pseudomonadati</taxon>
        <taxon>Pseudomonadota</taxon>
        <taxon>Gammaproteobacteria</taxon>
        <taxon>Lysobacterales</taxon>
        <taxon>Lysobacteraceae</taxon>
        <taxon>Xanthomonas</taxon>
    </lineage>
</organism>
<feature type="chain" id="PRO_1000003867" description="Nucleoid-associated protein XC_3243">
    <location>
        <begin position="1"/>
        <end position="106"/>
    </location>
</feature>
<feature type="region of interest" description="Disordered" evidence="2">
    <location>
        <begin position="82"/>
        <end position="106"/>
    </location>
</feature>
<keyword id="KW-0963">Cytoplasm</keyword>
<keyword id="KW-0238">DNA-binding</keyword>
<sequence>MRGNIAQLMQQAQKMQENLQRAQEELAKLEVTGSAGGGMVSVTLTGAKECRKVRIDPSILSDQEMAEDLIAAAFNDASNKIDAESKERMGSATAGMQLPPGMKLPF</sequence>